<sequence>MATIVQCLSSCATLESQFKVLSLKGISCSSPSSSFSNRRGASATLSSSLSFSQSVSQCVAFSTGNLWVQKPMRQLIVCEAAAPTKKADSAAKRARQAEKRRVYNKSKKSEARTRMKKVLEALEGLKKKTDAQADEIVTVEKLIGEAYSAIDKAVKVKALHKNTGARRKSRLARRKKAVEIHHGWYVPDAAAAAPSEAVPMAA</sequence>
<feature type="transit peptide" description="Chloroplast" evidence="1">
    <location>
        <begin position="1"/>
        <end position="79"/>
    </location>
</feature>
<feature type="chain" id="PRO_0000249412" description="Small ribosomal subunit protein bS20c">
    <location>
        <begin position="80"/>
        <end position="202"/>
    </location>
</feature>
<feature type="region of interest" description="Disordered" evidence="2">
    <location>
        <begin position="89"/>
        <end position="110"/>
    </location>
</feature>
<evidence type="ECO:0000250" key="1"/>
<evidence type="ECO:0000256" key="2">
    <source>
        <dbReference type="SAM" id="MobiDB-lite"/>
    </source>
</evidence>
<evidence type="ECO:0000269" key="3">
    <source>
    </source>
</evidence>
<evidence type="ECO:0000303" key="4">
    <source>
    </source>
</evidence>
<evidence type="ECO:0000305" key="5"/>
<name>RR20_ARATH</name>
<comment type="function">
    <text evidence="1">Binds directly to 16S ribosomal RNA.</text>
</comment>
<comment type="subunit">
    <text evidence="1">Part of the 30S ribosomal subunit.</text>
</comment>
<comment type="subcellular location">
    <subcellularLocation>
        <location evidence="1">Plastid</location>
        <location evidence="1">Chloroplast</location>
    </subcellularLocation>
</comment>
<comment type="disruption phenotype">
    <text evidence="3">Embryonic lethality. Embryo development arrested at the globular stage.</text>
</comment>
<comment type="similarity">
    <text evidence="5">Belongs to the bacterial ribosomal protein bS20 family.</text>
</comment>
<comment type="sequence caution" evidence="5">
    <conflict type="erroneous gene model prediction">
        <sequence resource="EMBL-CDS" id="BAB02573"/>
    </conflict>
</comment>
<proteinExistence type="evidence at transcript level"/>
<keyword id="KW-0150">Chloroplast</keyword>
<keyword id="KW-0934">Plastid</keyword>
<keyword id="KW-1185">Reference proteome</keyword>
<keyword id="KW-0687">Ribonucleoprotein</keyword>
<keyword id="KW-0689">Ribosomal protein</keyword>
<keyword id="KW-0694">RNA-binding</keyword>
<keyword id="KW-0699">rRNA-binding</keyword>
<keyword id="KW-0809">Transit peptide</keyword>
<reference key="1">
    <citation type="journal article" date="2000" name="DNA Res.">
        <title>Structural analysis of Arabidopsis thaliana chromosome 3. II. Sequence features of the 4,251,695 bp regions covered by 90 P1, TAC and BAC clones.</title>
        <authorList>
            <person name="Kaneko T."/>
            <person name="Katoh T."/>
            <person name="Sato S."/>
            <person name="Nakamura Y."/>
            <person name="Asamizu E."/>
            <person name="Tabata S."/>
        </authorList>
    </citation>
    <scope>NUCLEOTIDE SEQUENCE [LARGE SCALE GENOMIC DNA]</scope>
    <source>
        <strain>cv. Columbia</strain>
    </source>
</reference>
<reference key="2">
    <citation type="journal article" date="2017" name="Plant J.">
        <title>Araport11: a complete reannotation of the Arabidopsis thaliana reference genome.</title>
        <authorList>
            <person name="Cheng C.Y."/>
            <person name="Krishnakumar V."/>
            <person name="Chan A.P."/>
            <person name="Thibaud-Nissen F."/>
            <person name="Schobel S."/>
            <person name="Town C.D."/>
        </authorList>
    </citation>
    <scope>GENOME REANNOTATION</scope>
    <source>
        <strain>cv. Columbia</strain>
    </source>
</reference>
<reference key="3">
    <citation type="journal article" date="2003" name="Science">
        <title>Empirical analysis of transcriptional activity in the Arabidopsis genome.</title>
        <authorList>
            <person name="Yamada K."/>
            <person name="Lim J."/>
            <person name="Dale J.M."/>
            <person name="Chen H."/>
            <person name="Shinn P."/>
            <person name="Palm C.J."/>
            <person name="Southwick A.M."/>
            <person name="Wu H.C."/>
            <person name="Kim C.J."/>
            <person name="Nguyen M."/>
            <person name="Pham P.K."/>
            <person name="Cheuk R.F."/>
            <person name="Karlin-Newmann G."/>
            <person name="Liu S.X."/>
            <person name="Lam B."/>
            <person name="Sakano H."/>
            <person name="Wu T."/>
            <person name="Yu G."/>
            <person name="Miranda M."/>
            <person name="Quach H.L."/>
            <person name="Tripp M."/>
            <person name="Chang C.H."/>
            <person name="Lee J.M."/>
            <person name="Toriumi M.J."/>
            <person name="Chan M.M."/>
            <person name="Tang C.C."/>
            <person name="Onodera C.S."/>
            <person name="Deng J.M."/>
            <person name="Akiyama K."/>
            <person name="Ansari Y."/>
            <person name="Arakawa T."/>
            <person name="Banh J."/>
            <person name="Banno F."/>
            <person name="Bowser L."/>
            <person name="Brooks S.Y."/>
            <person name="Carninci P."/>
            <person name="Chao Q."/>
            <person name="Choy N."/>
            <person name="Enju A."/>
            <person name="Goldsmith A.D."/>
            <person name="Gurjal M."/>
            <person name="Hansen N.F."/>
            <person name="Hayashizaki Y."/>
            <person name="Johnson-Hopson C."/>
            <person name="Hsuan V.W."/>
            <person name="Iida K."/>
            <person name="Karnes M."/>
            <person name="Khan S."/>
            <person name="Koesema E."/>
            <person name="Ishida J."/>
            <person name="Jiang P.X."/>
            <person name="Jones T."/>
            <person name="Kawai J."/>
            <person name="Kamiya A."/>
            <person name="Meyers C."/>
            <person name="Nakajima M."/>
            <person name="Narusaka M."/>
            <person name="Seki M."/>
            <person name="Sakurai T."/>
            <person name="Satou M."/>
            <person name="Tamse R."/>
            <person name="Vaysberg M."/>
            <person name="Wallender E.K."/>
            <person name="Wong C."/>
            <person name="Yamamura Y."/>
            <person name="Yuan S."/>
            <person name="Shinozaki K."/>
            <person name="Davis R.W."/>
            <person name="Theologis A."/>
            <person name="Ecker J.R."/>
        </authorList>
    </citation>
    <scope>NUCLEOTIDE SEQUENCE [LARGE SCALE MRNA]</scope>
    <source>
        <strain>cv. Columbia</strain>
    </source>
</reference>
<reference key="4">
    <citation type="submission" date="2002-03" db="EMBL/GenBank/DDBJ databases">
        <title>Full-length cDNA from Arabidopsis thaliana.</title>
        <authorList>
            <person name="Brover V.V."/>
            <person name="Troukhan M.E."/>
            <person name="Alexandrov N.A."/>
            <person name="Lu Y.-P."/>
            <person name="Flavell R.B."/>
            <person name="Feldmann K.A."/>
        </authorList>
    </citation>
    <scope>NUCLEOTIDE SEQUENCE [LARGE SCALE MRNA]</scope>
</reference>
<reference key="5">
    <citation type="journal article" date="2012" name="Plant J.">
        <title>Versatile roles of Arabidopsis plastid ribosomal proteins in plant growth and development.</title>
        <authorList>
            <person name="Romani I."/>
            <person name="Tadini L."/>
            <person name="Rossi F."/>
            <person name="Masiero S."/>
            <person name="Pribil M."/>
            <person name="Jahns P."/>
            <person name="Kater M."/>
            <person name="Leister D."/>
            <person name="Pesaresi P."/>
        </authorList>
    </citation>
    <scope>DISRUPTION PHENOTYPE</scope>
</reference>
<reference key="6">
    <citation type="journal article" date="2023" name="Plant Cell">
        <title>An updated nomenclature for plant ribosomal protein genes.</title>
        <authorList>
            <person name="Scarpin M.R."/>
            <person name="Busche M."/>
            <person name="Martinez R.E."/>
            <person name="Harper L.C."/>
            <person name="Reiser L."/>
            <person name="Szakonyi D."/>
            <person name="Merchante C."/>
            <person name="Lan T."/>
            <person name="Xiong W."/>
            <person name="Mo B."/>
            <person name="Tang G."/>
            <person name="Chen X."/>
            <person name="Bailey-Serres J."/>
            <person name="Browning K.S."/>
            <person name="Brunkard J.O."/>
        </authorList>
    </citation>
    <scope>NOMENCLATURE</scope>
</reference>
<gene>
    <name type="primary">RPS20</name>
    <name type="ordered locus">At3g15190</name>
    <name type="ORF">F4B12.10</name>
</gene>
<accession>Q9ASV6</accession>
<accession>Q9LIL6</accession>
<protein>
    <recommendedName>
        <fullName evidence="4">Small ribosomal subunit protein bS20c</fullName>
    </recommendedName>
    <alternativeName>
        <fullName>30S ribosomal protein S20, chloroplastic</fullName>
    </alternativeName>
</protein>
<dbReference type="EMBL" id="AP001299">
    <property type="protein sequence ID" value="BAB02573.1"/>
    <property type="status" value="ALT_SEQ"/>
    <property type="molecule type" value="Genomic_DNA"/>
</dbReference>
<dbReference type="EMBL" id="CP002686">
    <property type="protein sequence ID" value="AEE75630.1"/>
    <property type="molecule type" value="Genomic_DNA"/>
</dbReference>
<dbReference type="EMBL" id="AF361807">
    <property type="protein sequence ID" value="AAK32820.1"/>
    <property type="molecule type" value="mRNA"/>
</dbReference>
<dbReference type="EMBL" id="AF370555">
    <property type="protein sequence ID" value="AAK48982.1"/>
    <property type="molecule type" value="mRNA"/>
</dbReference>
<dbReference type="EMBL" id="AY055105">
    <property type="protein sequence ID" value="AAL05905.1"/>
    <property type="molecule type" value="mRNA"/>
</dbReference>
<dbReference type="EMBL" id="AY072522">
    <property type="protein sequence ID" value="AAL66937.1"/>
    <property type="molecule type" value="mRNA"/>
</dbReference>
<dbReference type="EMBL" id="AY086352">
    <property type="protein sequence ID" value="AAM64420.1"/>
    <property type="molecule type" value="mRNA"/>
</dbReference>
<dbReference type="SMR" id="Q9ASV6"/>
<dbReference type="BioGRID" id="6084">
    <property type="interactions" value="6"/>
</dbReference>
<dbReference type="FunCoup" id="Q9ASV6">
    <property type="interactions" value="1267"/>
</dbReference>
<dbReference type="STRING" id="3702.Q9ASV6"/>
<dbReference type="PaxDb" id="3702-AT3G15190.1"/>
<dbReference type="ProteomicsDB" id="228226"/>
<dbReference type="EnsemblPlants" id="AT3G15190.1">
    <property type="protein sequence ID" value="AT3G15190.1"/>
    <property type="gene ID" value="AT3G15190"/>
</dbReference>
<dbReference type="Gramene" id="AT3G15190.1">
    <property type="protein sequence ID" value="AT3G15190.1"/>
    <property type="gene ID" value="AT3G15190"/>
</dbReference>
<dbReference type="KEGG" id="ath:AT3G15190"/>
<dbReference type="Araport" id="AT3G15190"/>
<dbReference type="TAIR" id="AT3G15190">
    <property type="gene designation" value="PRPS20"/>
</dbReference>
<dbReference type="eggNOG" id="ENOG502RXSZ">
    <property type="taxonomic scope" value="Eukaryota"/>
</dbReference>
<dbReference type="HOGENOM" id="CLU_109118_1_0_1"/>
<dbReference type="InParanoid" id="Q9ASV6"/>
<dbReference type="OMA" id="CATRVKK"/>
<dbReference type="OrthoDB" id="1111501at2759"/>
<dbReference type="PhylomeDB" id="Q9ASV6"/>
<dbReference type="PRO" id="PR:Q9ASV6"/>
<dbReference type="Proteomes" id="UP000006548">
    <property type="component" value="Chromosome 3"/>
</dbReference>
<dbReference type="ExpressionAtlas" id="Q9ASV6">
    <property type="expression patterns" value="baseline and differential"/>
</dbReference>
<dbReference type="GO" id="GO:0009507">
    <property type="term" value="C:chloroplast"/>
    <property type="evidence" value="ECO:0007005"/>
    <property type="project" value="TAIR"/>
</dbReference>
<dbReference type="GO" id="GO:0009941">
    <property type="term" value="C:chloroplast envelope"/>
    <property type="evidence" value="ECO:0007005"/>
    <property type="project" value="TAIR"/>
</dbReference>
<dbReference type="GO" id="GO:0009570">
    <property type="term" value="C:chloroplast stroma"/>
    <property type="evidence" value="ECO:0007005"/>
    <property type="project" value="TAIR"/>
</dbReference>
<dbReference type="GO" id="GO:0005829">
    <property type="term" value="C:cytosol"/>
    <property type="evidence" value="ECO:0007005"/>
    <property type="project" value="TAIR"/>
</dbReference>
<dbReference type="GO" id="GO:1990904">
    <property type="term" value="C:ribonucleoprotein complex"/>
    <property type="evidence" value="ECO:0007669"/>
    <property type="project" value="UniProtKB-KW"/>
</dbReference>
<dbReference type="GO" id="GO:0005840">
    <property type="term" value="C:ribosome"/>
    <property type="evidence" value="ECO:0007669"/>
    <property type="project" value="UniProtKB-KW"/>
</dbReference>
<dbReference type="GO" id="GO:0003729">
    <property type="term" value="F:mRNA binding"/>
    <property type="evidence" value="ECO:0000314"/>
    <property type="project" value="TAIR"/>
</dbReference>
<dbReference type="GO" id="GO:0019843">
    <property type="term" value="F:rRNA binding"/>
    <property type="evidence" value="ECO:0007669"/>
    <property type="project" value="UniProtKB-KW"/>
</dbReference>
<dbReference type="GO" id="GO:0003735">
    <property type="term" value="F:structural constituent of ribosome"/>
    <property type="evidence" value="ECO:0007669"/>
    <property type="project" value="InterPro"/>
</dbReference>
<dbReference type="GO" id="GO:0006412">
    <property type="term" value="P:translation"/>
    <property type="evidence" value="ECO:0007669"/>
    <property type="project" value="InterPro"/>
</dbReference>
<dbReference type="FunFam" id="1.20.58.110:FF:000003">
    <property type="entry name" value="30S ribosomal protein S20, chloroplastic"/>
    <property type="match status" value="1"/>
</dbReference>
<dbReference type="Gene3D" id="1.20.58.110">
    <property type="entry name" value="Ribosomal protein S20"/>
    <property type="match status" value="1"/>
</dbReference>
<dbReference type="HAMAP" id="MF_00500">
    <property type="entry name" value="Ribosomal_bS20"/>
    <property type="match status" value="1"/>
</dbReference>
<dbReference type="InterPro" id="IPR002583">
    <property type="entry name" value="Ribosomal_bS20"/>
</dbReference>
<dbReference type="InterPro" id="IPR036510">
    <property type="entry name" value="Ribosomal_bS20_sf"/>
</dbReference>
<dbReference type="NCBIfam" id="TIGR00029">
    <property type="entry name" value="S20"/>
    <property type="match status" value="1"/>
</dbReference>
<dbReference type="PANTHER" id="PTHR33398">
    <property type="entry name" value="30S RIBOSOMAL PROTEIN S20"/>
    <property type="match status" value="1"/>
</dbReference>
<dbReference type="PANTHER" id="PTHR33398:SF1">
    <property type="entry name" value="SMALL RIBOSOMAL SUBUNIT PROTEIN BS20C"/>
    <property type="match status" value="1"/>
</dbReference>
<dbReference type="Pfam" id="PF01649">
    <property type="entry name" value="Ribosomal_S20p"/>
    <property type="match status" value="1"/>
</dbReference>
<dbReference type="SUPFAM" id="SSF46992">
    <property type="entry name" value="Ribosomal protein S20"/>
    <property type="match status" value="1"/>
</dbReference>
<organism>
    <name type="scientific">Arabidopsis thaliana</name>
    <name type="common">Mouse-ear cress</name>
    <dbReference type="NCBI Taxonomy" id="3702"/>
    <lineage>
        <taxon>Eukaryota</taxon>
        <taxon>Viridiplantae</taxon>
        <taxon>Streptophyta</taxon>
        <taxon>Embryophyta</taxon>
        <taxon>Tracheophyta</taxon>
        <taxon>Spermatophyta</taxon>
        <taxon>Magnoliopsida</taxon>
        <taxon>eudicotyledons</taxon>
        <taxon>Gunneridae</taxon>
        <taxon>Pentapetalae</taxon>
        <taxon>rosids</taxon>
        <taxon>malvids</taxon>
        <taxon>Brassicales</taxon>
        <taxon>Brassicaceae</taxon>
        <taxon>Camelineae</taxon>
        <taxon>Arabidopsis</taxon>
    </lineage>
</organism>